<protein>
    <recommendedName>
        <fullName evidence="1">Nucleoid-associated protein TTHA1599</fullName>
    </recommendedName>
</protein>
<comment type="function">
    <text evidence="1">Binds to DNA and alters its conformation. May be involved in regulation of gene expression, nucleoid organization and DNA protection.</text>
</comment>
<comment type="subunit">
    <text evidence="1">Homodimer.</text>
</comment>
<comment type="subcellular location">
    <subcellularLocation>
        <location evidence="1">Cytoplasm</location>
        <location evidence="1">Nucleoid</location>
    </subcellularLocation>
</comment>
<comment type="similarity">
    <text evidence="1">Belongs to the YbaB/EbfC family.</text>
</comment>
<sequence>MNFQKLLKEAQKAQKKAAEVQERLERMTVVGSAQGLVEVEANGHGKILALRLKPEALKAFQDDPEGLEDLLLVAIQDAQTKAHELSEKEMAKELGGVGQMLGKLF</sequence>
<feature type="chain" id="PRO_1000003863" description="Nucleoid-associated protein TTHA1599">
    <location>
        <begin position="1"/>
        <end position="105"/>
    </location>
</feature>
<keyword id="KW-0963">Cytoplasm</keyword>
<keyword id="KW-0238">DNA-binding</keyword>
<keyword id="KW-1185">Reference proteome</keyword>
<name>Y1599_THET8</name>
<accession>Q5SHY1</accession>
<proteinExistence type="inferred from homology"/>
<gene>
    <name type="ordered locus">TTHA1599</name>
</gene>
<reference key="1">
    <citation type="submission" date="2004-11" db="EMBL/GenBank/DDBJ databases">
        <title>Complete genome sequence of Thermus thermophilus HB8.</title>
        <authorList>
            <person name="Masui R."/>
            <person name="Kurokawa K."/>
            <person name="Nakagawa N."/>
            <person name="Tokunaga F."/>
            <person name="Koyama Y."/>
            <person name="Shibata T."/>
            <person name="Oshima T."/>
            <person name="Yokoyama S."/>
            <person name="Yasunaga T."/>
            <person name="Kuramitsu S."/>
        </authorList>
    </citation>
    <scope>NUCLEOTIDE SEQUENCE [LARGE SCALE GENOMIC DNA]</scope>
    <source>
        <strain>ATCC 27634 / DSM 579 / HB8</strain>
    </source>
</reference>
<dbReference type="EMBL" id="AP008226">
    <property type="protein sequence ID" value="BAD71422.1"/>
    <property type="molecule type" value="Genomic_DNA"/>
</dbReference>
<dbReference type="RefSeq" id="WP_008633232.1">
    <property type="nucleotide sequence ID" value="NC_006461.1"/>
</dbReference>
<dbReference type="RefSeq" id="YP_144865.1">
    <property type="nucleotide sequence ID" value="NC_006461.1"/>
</dbReference>
<dbReference type="SMR" id="Q5SHY1"/>
<dbReference type="EnsemblBacteria" id="BAD71422">
    <property type="protein sequence ID" value="BAD71422"/>
    <property type="gene ID" value="BAD71422"/>
</dbReference>
<dbReference type="GeneID" id="3169320"/>
<dbReference type="KEGG" id="ttj:TTHA1599"/>
<dbReference type="eggNOG" id="COG0718">
    <property type="taxonomic scope" value="Bacteria"/>
</dbReference>
<dbReference type="HOGENOM" id="CLU_140930_2_2_0"/>
<dbReference type="PhylomeDB" id="Q5SHY1"/>
<dbReference type="Proteomes" id="UP000000532">
    <property type="component" value="Chromosome"/>
</dbReference>
<dbReference type="GO" id="GO:0043590">
    <property type="term" value="C:bacterial nucleoid"/>
    <property type="evidence" value="ECO:0007669"/>
    <property type="project" value="UniProtKB-UniRule"/>
</dbReference>
<dbReference type="GO" id="GO:0005829">
    <property type="term" value="C:cytosol"/>
    <property type="evidence" value="ECO:0007669"/>
    <property type="project" value="TreeGrafter"/>
</dbReference>
<dbReference type="GO" id="GO:0003677">
    <property type="term" value="F:DNA binding"/>
    <property type="evidence" value="ECO:0007669"/>
    <property type="project" value="UniProtKB-UniRule"/>
</dbReference>
<dbReference type="Gene3D" id="3.30.1310.10">
    <property type="entry name" value="Nucleoid-associated protein YbaB-like domain"/>
    <property type="match status" value="1"/>
</dbReference>
<dbReference type="HAMAP" id="MF_00274">
    <property type="entry name" value="DNA_YbaB_EbfC"/>
    <property type="match status" value="1"/>
</dbReference>
<dbReference type="InterPro" id="IPR036894">
    <property type="entry name" value="YbaB-like_sf"/>
</dbReference>
<dbReference type="InterPro" id="IPR004401">
    <property type="entry name" value="YbaB/EbfC"/>
</dbReference>
<dbReference type="NCBIfam" id="TIGR00103">
    <property type="entry name" value="DNA_YbaB_EbfC"/>
    <property type="match status" value="1"/>
</dbReference>
<dbReference type="PANTHER" id="PTHR33449">
    <property type="entry name" value="NUCLEOID-ASSOCIATED PROTEIN YBAB"/>
    <property type="match status" value="1"/>
</dbReference>
<dbReference type="PANTHER" id="PTHR33449:SF1">
    <property type="entry name" value="NUCLEOID-ASSOCIATED PROTEIN YBAB"/>
    <property type="match status" value="1"/>
</dbReference>
<dbReference type="Pfam" id="PF02575">
    <property type="entry name" value="YbaB_DNA_bd"/>
    <property type="match status" value="1"/>
</dbReference>
<dbReference type="PIRSF" id="PIRSF004555">
    <property type="entry name" value="UCP004555"/>
    <property type="match status" value="1"/>
</dbReference>
<dbReference type="SUPFAM" id="SSF82607">
    <property type="entry name" value="YbaB-like"/>
    <property type="match status" value="1"/>
</dbReference>
<evidence type="ECO:0000255" key="1">
    <source>
        <dbReference type="HAMAP-Rule" id="MF_00274"/>
    </source>
</evidence>
<organism>
    <name type="scientific">Thermus thermophilus (strain ATCC 27634 / DSM 579 / HB8)</name>
    <dbReference type="NCBI Taxonomy" id="300852"/>
    <lineage>
        <taxon>Bacteria</taxon>
        <taxon>Thermotogati</taxon>
        <taxon>Deinococcota</taxon>
        <taxon>Deinococci</taxon>
        <taxon>Thermales</taxon>
        <taxon>Thermaceae</taxon>
        <taxon>Thermus</taxon>
    </lineage>
</organism>